<comment type="function">
    <text evidence="1">Catalyzes the reversible isomerization-deamination of glucosamine 6-phosphate (GlcN6P) to form fructose 6-phosphate (Fru6P) and ammonium ion.</text>
</comment>
<comment type="catalytic activity">
    <reaction evidence="1">
        <text>alpha-D-glucosamine 6-phosphate + H2O = beta-D-fructose 6-phosphate + NH4(+)</text>
        <dbReference type="Rhea" id="RHEA:12172"/>
        <dbReference type="ChEBI" id="CHEBI:15377"/>
        <dbReference type="ChEBI" id="CHEBI:28938"/>
        <dbReference type="ChEBI" id="CHEBI:57634"/>
        <dbReference type="ChEBI" id="CHEBI:75989"/>
        <dbReference type="EC" id="3.5.99.6"/>
    </reaction>
</comment>
<comment type="activity regulation">
    <text evidence="1">Allosterically activated by N-acetylglucosamine 6-phosphate (GlcNAc6P).</text>
</comment>
<comment type="pathway">
    <text evidence="1">Amino-sugar metabolism; N-acetylneuraminate degradation; D-fructose 6-phosphate from N-acetylneuraminate: step 5/5.</text>
</comment>
<comment type="subunit">
    <text evidence="1">Homohexamer.</text>
</comment>
<comment type="similarity">
    <text evidence="1">Belongs to the glucosamine/galactosamine-6-phosphate isomerase family. NagB subfamily.</text>
</comment>
<dbReference type="EC" id="3.5.99.6" evidence="1"/>
<dbReference type="EMBL" id="CP001144">
    <property type="protein sequence ID" value="ACH75110.1"/>
    <property type="molecule type" value="Genomic_DNA"/>
</dbReference>
<dbReference type="RefSeq" id="WP_001237059.1">
    <property type="nucleotide sequence ID" value="NC_011205.1"/>
</dbReference>
<dbReference type="SMR" id="B5FNB9"/>
<dbReference type="KEGG" id="sed:SeD_A0790"/>
<dbReference type="HOGENOM" id="CLU_049611_0_1_6"/>
<dbReference type="UniPathway" id="UPA00629">
    <property type="reaction ID" value="UER00684"/>
</dbReference>
<dbReference type="Proteomes" id="UP000008322">
    <property type="component" value="Chromosome"/>
</dbReference>
<dbReference type="GO" id="GO:0005737">
    <property type="term" value="C:cytoplasm"/>
    <property type="evidence" value="ECO:0007669"/>
    <property type="project" value="TreeGrafter"/>
</dbReference>
<dbReference type="GO" id="GO:0004342">
    <property type="term" value="F:glucosamine-6-phosphate deaminase activity"/>
    <property type="evidence" value="ECO:0007669"/>
    <property type="project" value="UniProtKB-UniRule"/>
</dbReference>
<dbReference type="GO" id="GO:0042802">
    <property type="term" value="F:identical protein binding"/>
    <property type="evidence" value="ECO:0007669"/>
    <property type="project" value="TreeGrafter"/>
</dbReference>
<dbReference type="GO" id="GO:0005975">
    <property type="term" value="P:carbohydrate metabolic process"/>
    <property type="evidence" value="ECO:0007669"/>
    <property type="project" value="InterPro"/>
</dbReference>
<dbReference type="GO" id="GO:0006043">
    <property type="term" value="P:glucosamine catabolic process"/>
    <property type="evidence" value="ECO:0007669"/>
    <property type="project" value="TreeGrafter"/>
</dbReference>
<dbReference type="GO" id="GO:0006046">
    <property type="term" value="P:N-acetylglucosamine catabolic process"/>
    <property type="evidence" value="ECO:0007669"/>
    <property type="project" value="TreeGrafter"/>
</dbReference>
<dbReference type="GO" id="GO:0019262">
    <property type="term" value="P:N-acetylneuraminate catabolic process"/>
    <property type="evidence" value="ECO:0007669"/>
    <property type="project" value="UniProtKB-UniRule"/>
</dbReference>
<dbReference type="CDD" id="cd01399">
    <property type="entry name" value="GlcN6P_deaminase"/>
    <property type="match status" value="1"/>
</dbReference>
<dbReference type="FunFam" id="3.40.50.1360:FF:000002">
    <property type="entry name" value="Glucosamine-6-phosphate deaminase"/>
    <property type="match status" value="1"/>
</dbReference>
<dbReference type="Gene3D" id="3.40.50.1360">
    <property type="match status" value="1"/>
</dbReference>
<dbReference type="HAMAP" id="MF_01241">
    <property type="entry name" value="GlcN6P_deamin"/>
    <property type="match status" value="1"/>
</dbReference>
<dbReference type="InterPro" id="IPR006148">
    <property type="entry name" value="Glc/Gal-6P_isomerase"/>
</dbReference>
<dbReference type="InterPro" id="IPR004547">
    <property type="entry name" value="Glucosamine6P_isomerase"/>
</dbReference>
<dbReference type="InterPro" id="IPR018321">
    <property type="entry name" value="Glucosamine6P_isomerase_CS"/>
</dbReference>
<dbReference type="InterPro" id="IPR037171">
    <property type="entry name" value="NagB/RpiA_transferase-like"/>
</dbReference>
<dbReference type="NCBIfam" id="TIGR00502">
    <property type="entry name" value="nagB"/>
    <property type="match status" value="1"/>
</dbReference>
<dbReference type="NCBIfam" id="NF001685">
    <property type="entry name" value="PRK00443.1-5"/>
    <property type="match status" value="1"/>
</dbReference>
<dbReference type="PANTHER" id="PTHR11280">
    <property type="entry name" value="GLUCOSAMINE-6-PHOSPHATE ISOMERASE"/>
    <property type="match status" value="1"/>
</dbReference>
<dbReference type="PANTHER" id="PTHR11280:SF5">
    <property type="entry name" value="GLUCOSAMINE-6-PHOSPHATE ISOMERASE"/>
    <property type="match status" value="1"/>
</dbReference>
<dbReference type="Pfam" id="PF01182">
    <property type="entry name" value="Glucosamine_iso"/>
    <property type="match status" value="1"/>
</dbReference>
<dbReference type="SUPFAM" id="SSF100950">
    <property type="entry name" value="NagB/RpiA/CoA transferase-like"/>
    <property type="match status" value="1"/>
</dbReference>
<dbReference type="PROSITE" id="PS01161">
    <property type="entry name" value="GLC_GALNAC_ISOMERASE"/>
    <property type="match status" value="1"/>
</dbReference>
<sequence>MRLIPLSTAEQVGKWAARHIVNRINAFKPTADRPFVLGLPTGGTPLTAYKALVEMHKAGEVSFKHVVTFNMDEYVGLPKEHPESYHSFMHRNFFDHVDIPAENINLLNGNAPDIDAECRQYEEKIRSYGKIHLFMGGVGNDGHIAFNEPASSLASRTRIKTLTHDTRVANSRFFDGDVNQVPKYALTVGVGTLLDAEEVMILVLGHQKAQALQAAVEGNVNHMWTISCLQLHPKAVVVCDEPSTMELKVKTLKYFNELEAENIKGL</sequence>
<evidence type="ECO:0000255" key="1">
    <source>
        <dbReference type="HAMAP-Rule" id="MF_01241"/>
    </source>
</evidence>
<organism>
    <name type="scientific">Salmonella dublin (strain CT_02021853)</name>
    <dbReference type="NCBI Taxonomy" id="439851"/>
    <lineage>
        <taxon>Bacteria</taxon>
        <taxon>Pseudomonadati</taxon>
        <taxon>Pseudomonadota</taxon>
        <taxon>Gammaproteobacteria</taxon>
        <taxon>Enterobacterales</taxon>
        <taxon>Enterobacteriaceae</taxon>
        <taxon>Salmonella</taxon>
    </lineage>
</organism>
<proteinExistence type="inferred from homology"/>
<gene>
    <name evidence="1" type="primary">nagB</name>
    <name type="ordered locus">SeD_A0790</name>
</gene>
<feature type="chain" id="PRO_1000139785" description="Glucosamine-6-phosphate deaminase">
    <location>
        <begin position="1"/>
        <end position="266"/>
    </location>
</feature>
<feature type="active site" description="Proton acceptor; for enolization step" evidence="1">
    <location>
        <position position="72"/>
    </location>
</feature>
<feature type="active site" description="For ring-opening step" evidence="1">
    <location>
        <position position="141"/>
    </location>
</feature>
<feature type="active site" description="Proton acceptor; for ring-opening step" evidence="1">
    <location>
        <position position="143"/>
    </location>
</feature>
<feature type="active site" description="For ring-opening step" evidence="1">
    <location>
        <position position="148"/>
    </location>
</feature>
<feature type="site" description="Part of the allosteric site" evidence="1">
    <location>
        <position position="151"/>
    </location>
</feature>
<feature type="site" description="Part of the allosteric site" evidence="1">
    <location>
        <position position="158"/>
    </location>
</feature>
<feature type="site" description="Part of the allosteric site" evidence="1">
    <location>
        <position position="160"/>
    </location>
</feature>
<feature type="site" description="Part of the allosteric site" evidence="1">
    <location>
        <position position="161"/>
    </location>
</feature>
<feature type="site" description="Part of the allosteric site" evidence="1">
    <location>
        <position position="254"/>
    </location>
</feature>
<name>NAGB_SALDC</name>
<protein>
    <recommendedName>
        <fullName evidence="1">Glucosamine-6-phosphate deaminase</fullName>
        <ecNumber evidence="1">3.5.99.6</ecNumber>
    </recommendedName>
    <alternativeName>
        <fullName evidence="1">GlcN6P deaminase</fullName>
        <shortName evidence="1">GNPDA</shortName>
    </alternativeName>
    <alternativeName>
        <fullName evidence="1">Glucosamine-6-phosphate isomerase</fullName>
    </alternativeName>
</protein>
<keyword id="KW-0021">Allosteric enzyme</keyword>
<keyword id="KW-0119">Carbohydrate metabolism</keyword>
<keyword id="KW-0378">Hydrolase</keyword>
<accession>B5FNB9</accession>
<reference key="1">
    <citation type="journal article" date="2011" name="J. Bacteriol.">
        <title>Comparative genomics of 28 Salmonella enterica isolates: evidence for CRISPR-mediated adaptive sublineage evolution.</title>
        <authorList>
            <person name="Fricke W.F."/>
            <person name="Mammel M.K."/>
            <person name="McDermott P.F."/>
            <person name="Tartera C."/>
            <person name="White D.G."/>
            <person name="Leclerc J.E."/>
            <person name="Ravel J."/>
            <person name="Cebula T.A."/>
        </authorList>
    </citation>
    <scope>NUCLEOTIDE SEQUENCE [LARGE SCALE GENOMIC DNA]</scope>
    <source>
        <strain>CT_02021853</strain>
    </source>
</reference>